<sequence>MQKMTIKEAENVLKEIMNEEDDRFQLLMKDERKGVQKLVLKWYKQKELEQKEKENFFEMSKYENALREKGVTYIAGIDEVGRGPLAGPVVTAAVVLPEDFYIPGLNDSKKLSEAKRERFYDEIKVQAIAIGVGIVSPQVIDDINIYQATKQAMLDAVANLSCTPQHLLIDAMKLPTPIPQTSIIKGDAKSISISAASIIAKVTRDRMMKELGEKYPEYGFEQHMGYGTKQHLEAIEVHGVLDEHRKSFAPIKDMIQK</sequence>
<name>RNH2_BACC2</name>
<proteinExistence type="inferred from homology"/>
<accession>B7IUJ6</accession>
<keyword id="KW-0963">Cytoplasm</keyword>
<keyword id="KW-0255">Endonuclease</keyword>
<keyword id="KW-0378">Hydrolase</keyword>
<keyword id="KW-0464">Manganese</keyword>
<keyword id="KW-0479">Metal-binding</keyword>
<keyword id="KW-0540">Nuclease</keyword>
<gene>
    <name evidence="1" type="primary">rnhB</name>
    <name type="ordered locus">BCG9842_B1308</name>
</gene>
<dbReference type="EC" id="3.1.26.4" evidence="1"/>
<dbReference type="EMBL" id="CP001186">
    <property type="protein sequence ID" value="ACK96380.1"/>
    <property type="molecule type" value="Genomic_DNA"/>
</dbReference>
<dbReference type="RefSeq" id="WP_001171121.1">
    <property type="nucleotide sequence ID" value="NC_011772.1"/>
</dbReference>
<dbReference type="SMR" id="B7IUJ6"/>
<dbReference type="KEGG" id="bcg:BCG9842_B1308"/>
<dbReference type="HOGENOM" id="CLU_036532_2_1_9"/>
<dbReference type="Proteomes" id="UP000006744">
    <property type="component" value="Chromosome"/>
</dbReference>
<dbReference type="GO" id="GO:0005737">
    <property type="term" value="C:cytoplasm"/>
    <property type="evidence" value="ECO:0007669"/>
    <property type="project" value="UniProtKB-SubCell"/>
</dbReference>
<dbReference type="GO" id="GO:0032299">
    <property type="term" value="C:ribonuclease H2 complex"/>
    <property type="evidence" value="ECO:0007669"/>
    <property type="project" value="TreeGrafter"/>
</dbReference>
<dbReference type="GO" id="GO:0030145">
    <property type="term" value="F:manganese ion binding"/>
    <property type="evidence" value="ECO:0007669"/>
    <property type="project" value="UniProtKB-UniRule"/>
</dbReference>
<dbReference type="GO" id="GO:0003723">
    <property type="term" value="F:RNA binding"/>
    <property type="evidence" value="ECO:0007669"/>
    <property type="project" value="InterPro"/>
</dbReference>
<dbReference type="GO" id="GO:0004523">
    <property type="term" value="F:RNA-DNA hybrid ribonuclease activity"/>
    <property type="evidence" value="ECO:0007669"/>
    <property type="project" value="UniProtKB-UniRule"/>
</dbReference>
<dbReference type="GO" id="GO:0043137">
    <property type="term" value="P:DNA replication, removal of RNA primer"/>
    <property type="evidence" value="ECO:0007669"/>
    <property type="project" value="TreeGrafter"/>
</dbReference>
<dbReference type="GO" id="GO:0006298">
    <property type="term" value="P:mismatch repair"/>
    <property type="evidence" value="ECO:0007669"/>
    <property type="project" value="TreeGrafter"/>
</dbReference>
<dbReference type="CDD" id="cd07182">
    <property type="entry name" value="RNase_HII_bacteria_HII_like"/>
    <property type="match status" value="1"/>
</dbReference>
<dbReference type="FunFam" id="3.30.420.10:FF:000006">
    <property type="entry name" value="Ribonuclease HII"/>
    <property type="match status" value="1"/>
</dbReference>
<dbReference type="Gene3D" id="3.30.420.10">
    <property type="entry name" value="Ribonuclease H-like superfamily/Ribonuclease H"/>
    <property type="match status" value="1"/>
</dbReference>
<dbReference type="HAMAP" id="MF_00052_B">
    <property type="entry name" value="RNase_HII_B"/>
    <property type="match status" value="1"/>
</dbReference>
<dbReference type="InterPro" id="IPR022898">
    <property type="entry name" value="RNase_HII"/>
</dbReference>
<dbReference type="InterPro" id="IPR001352">
    <property type="entry name" value="RNase_HII/HIII"/>
</dbReference>
<dbReference type="InterPro" id="IPR024567">
    <property type="entry name" value="RNase_HII/HIII_dom"/>
</dbReference>
<dbReference type="InterPro" id="IPR012337">
    <property type="entry name" value="RNaseH-like_sf"/>
</dbReference>
<dbReference type="InterPro" id="IPR036397">
    <property type="entry name" value="RNaseH_sf"/>
</dbReference>
<dbReference type="NCBIfam" id="NF000594">
    <property type="entry name" value="PRK00015.1-1"/>
    <property type="match status" value="1"/>
</dbReference>
<dbReference type="NCBIfam" id="NF000595">
    <property type="entry name" value="PRK00015.1-3"/>
    <property type="match status" value="1"/>
</dbReference>
<dbReference type="PANTHER" id="PTHR10954">
    <property type="entry name" value="RIBONUCLEASE H2 SUBUNIT A"/>
    <property type="match status" value="1"/>
</dbReference>
<dbReference type="PANTHER" id="PTHR10954:SF18">
    <property type="entry name" value="RIBONUCLEASE HII"/>
    <property type="match status" value="1"/>
</dbReference>
<dbReference type="Pfam" id="PF01351">
    <property type="entry name" value="RNase_HII"/>
    <property type="match status" value="1"/>
</dbReference>
<dbReference type="SUPFAM" id="SSF53098">
    <property type="entry name" value="Ribonuclease H-like"/>
    <property type="match status" value="1"/>
</dbReference>
<dbReference type="PROSITE" id="PS51975">
    <property type="entry name" value="RNASE_H_2"/>
    <property type="match status" value="1"/>
</dbReference>
<reference key="1">
    <citation type="submission" date="2008-10" db="EMBL/GenBank/DDBJ databases">
        <title>Genome sequence of Bacillus cereus G9842.</title>
        <authorList>
            <person name="Dodson R.J."/>
            <person name="Durkin A.S."/>
            <person name="Rosovitz M.J."/>
            <person name="Rasko D.A."/>
            <person name="Hoffmaster A."/>
            <person name="Ravel J."/>
            <person name="Sutton G."/>
        </authorList>
    </citation>
    <scope>NUCLEOTIDE SEQUENCE [LARGE SCALE GENOMIC DNA]</scope>
    <source>
        <strain>G9842</strain>
    </source>
</reference>
<organism>
    <name type="scientific">Bacillus cereus (strain G9842)</name>
    <dbReference type="NCBI Taxonomy" id="405531"/>
    <lineage>
        <taxon>Bacteria</taxon>
        <taxon>Bacillati</taxon>
        <taxon>Bacillota</taxon>
        <taxon>Bacilli</taxon>
        <taxon>Bacillales</taxon>
        <taxon>Bacillaceae</taxon>
        <taxon>Bacillus</taxon>
        <taxon>Bacillus cereus group</taxon>
    </lineage>
</organism>
<protein>
    <recommendedName>
        <fullName evidence="1">Ribonuclease HII</fullName>
        <shortName evidence="1">RNase HII</shortName>
        <ecNumber evidence="1">3.1.26.4</ecNumber>
    </recommendedName>
</protein>
<feature type="chain" id="PRO_1000116839" description="Ribonuclease HII">
    <location>
        <begin position="1"/>
        <end position="257"/>
    </location>
</feature>
<feature type="domain" description="RNase H type-2" evidence="2">
    <location>
        <begin position="72"/>
        <end position="257"/>
    </location>
</feature>
<feature type="binding site" evidence="1">
    <location>
        <position position="78"/>
    </location>
    <ligand>
        <name>a divalent metal cation</name>
        <dbReference type="ChEBI" id="CHEBI:60240"/>
    </ligand>
</feature>
<feature type="binding site" evidence="1">
    <location>
        <position position="79"/>
    </location>
    <ligand>
        <name>a divalent metal cation</name>
        <dbReference type="ChEBI" id="CHEBI:60240"/>
    </ligand>
</feature>
<feature type="binding site" evidence="1">
    <location>
        <position position="170"/>
    </location>
    <ligand>
        <name>a divalent metal cation</name>
        <dbReference type="ChEBI" id="CHEBI:60240"/>
    </ligand>
</feature>
<evidence type="ECO:0000255" key="1">
    <source>
        <dbReference type="HAMAP-Rule" id="MF_00052"/>
    </source>
</evidence>
<evidence type="ECO:0000255" key="2">
    <source>
        <dbReference type="PROSITE-ProRule" id="PRU01319"/>
    </source>
</evidence>
<comment type="function">
    <text evidence="1">Endonuclease that specifically degrades the RNA of RNA-DNA hybrids.</text>
</comment>
<comment type="catalytic activity">
    <reaction evidence="1">
        <text>Endonucleolytic cleavage to 5'-phosphomonoester.</text>
        <dbReference type="EC" id="3.1.26.4"/>
    </reaction>
</comment>
<comment type="cofactor">
    <cofactor evidence="1">
        <name>Mn(2+)</name>
        <dbReference type="ChEBI" id="CHEBI:29035"/>
    </cofactor>
    <cofactor evidence="1">
        <name>Mg(2+)</name>
        <dbReference type="ChEBI" id="CHEBI:18420"/>
    </cofactor>
    <text evidence="1">Manganese or magnesium. Binds 1 divalent metal ion per monomer in the absence of substrate. May bind a second metal ion after substrate binding.</text>
</comment>
<comment type="subcellular location">
    <subcellularLocation>
        <location evidence="1">Cytoplasm</location>
    </subcellularLocation>
</comment>
<comment type="similarity">
    <text evidence="1">Belongs to the RNase HII family.</text>
</comment>